<keyword id="KW-0175">Coiled coil</keyword>
<keyword id="KW-0256">Endoplasmic reticulum</keyword>
<keyword id="KW-0931">ER-Golgi transport</keyword>
<keyword id="KW-0333">Golgi apparatus</keyword>
<keyword id="KW-0472">Membrane</keyword>
<keyword id="KW-0488">Methylation</keyword>
<keyword id="KW-0653">Protein transport</keyword>
<keyword id="KW-1185">Reference proteome</keyword>
<keyword id="KW-0732">Signal</keyword>
<keyword id="KW-0812">Transmembrane</keyword>
<keyword id="KW-1133">Transmembrane helix</keyword>
<keyword id="KW-0813">Transport</keyword>
<accession>Q9LQY3</accession>
<accession>Q8GWZ7</accession>
<accession>Q8LFL9</accession>
<name>P24D9_ARATH</name>
<feature type="signal peptide" evidence="2">
    <location>
        <begin position="1"/>
        <end position="24"/>
    </location>
</feature>
<feature type="chain" id="PRO_0000419789" description="Transmembrane emp24 domain-containing protein p24delta9">
    <location>
        <begin position="25"/>
        <end position="214"/>
    </location>
</feature>
<feature type="topological domain" description="Lumenal" evidence="2">
    <location>
        <begin position="25"/>
        <end position="181"/>
    </location>
</feature>
<feature type="transmembrane region" description="Helical" evidence="2">
    <location>
        <begin position="182"/>
        <end position="202"/>
    </location>
</feature>
<feature type="topological domain" description="Cytoplasmic" evidence="2">
    <location>
        <begin position="203"/>
        <end position="214"/>
    </location>
</feature>
<feature type="domain" description="GOLD" evidence="3">
    <location>
        <begin position="34"/>
        <end position="149"/>
    </location>
</feature>
<feature type="coiled-coil region" evidence="2">
    <location>
        <begin position="164"/>
        <end position="177"/>
    </location>
</feature>
<feature type="short sequence motif" description="COPI vesicle coat-binding" evidence="1">
    <location>
        <begin position="207"/>
        <end position="214"/>
    </location>
</feature>
<feature type="short sequence motif" description="COPII vesicle coat-binding" evidence="1">
    <location>
        <begin position="207"/>
        <end position="208"/>
    </location>
</feature>
<feature type="modified residue" description="Omega-N-methylated arginine" evidence="1">
    <location>
        <position position="167"/>
    </location>
</feature>
<feature type="sequence conflict" description="In Ref. 3; AAM67291." evidence="5" ref="3">
    <original>H</original>
    <variation>Q</variation>
    <location>
        <position position="110"/>
    </location>
</feature>
<reference key="1">
    <citation type="journal article" date="2000" name="Nature">
        <title>Sequence and analysis of chromosome 1 of the plant Arabidopsis thaliana.</title>
        <authorList>
            <person name="Theologis A."/>
            <person name="Ecker J.R."/>
            <person name="Palm C.J."/>
            <person name="Federspiel N.A."/>
            <person name="Kaul S."/>
            <person name="White O."/>
            <person name="Alonso J."/>
            <person name="Altafi H."/>
            <person name="Araujo R."/>
            <person name="Bowman C.L."/>
            <person name="Brooks S.Y."/>
            <person name="Buehler E."/>
            <person name="Chan A."/>
            <person name="Chao Q."/>
            <person name="Chen H."/>
            <person name="Cheuk R.F."/>
            <person name="Chin C.W."/>
            <person name="Chung M.K."/>
            <person name="Conn L."/>
            <person name="Conway A.B."/>
            <person name="Conway A.R."/>
            <person name="Creasy T.H."/>
            <person name="Dewar K."/>
            <person name="Dunn P."/>
            <person name="Etgu P."/>
            <person name="Feldblyum T.V."/>
            <person name="Feng J.-D."/>
            <person name="Fong B."/>
            <person name="Fujii C.Y."/>
            <person name="Gill J.E."/>
            <person name="Goldsmith A.D."/>
            <person name="Haas B."/>
            <person name="Hansen N.F."/>
            <person name="Hughes B."/>
            <person name="Huizar L."/>
            <person name="Hunter J.L."/>
            <person name="Jenkins J."/>
            <person name="Johnson-Hopson C."/>
            <person name="Khan S."/>
            <person name="Khaykin E."/>
            <person name="Kim C.J."/>
            <person name="Koo H.L."/>
            <person name="Kremenetskaia I."/>
            <person name="Kurtz D.B."/>
            <person name="Kwan A."/>
            <person name="Lam B."/>
            <person name="Langin-Hooper S."/>
            <person name="Lee A."/>
            <person name="Lee J.M."/>
            <person name="Lenz C.A."/>
            <person name="Li J.H."/>
            <person name="Li Y.-P."/>
            <person name="Lin X."/>
            <person name="Liu S.X."/>
            <person name="Liu Z.A."/>
            <person name="Luros J.S."/>
            <person name="Maiti R."/>
            <person name="Marziali A."/>
            <person name="Militscher J."/>
            <person name="Miranda M."/>
            <person name="Nguyen M."/>
            <person name="Nierman W.C."/>
            <person name="Osborne B.I."/>
            <person name="Pai G."/>
            <person name="Peterson J."/>
            <person name="Pham P.K."/>
            <person name="Rizzo M."/>
            <person name="Rooney T."/>
            <person name="Rowley D."/>
            <person name="Sakano H."/>
            <person name="Salzberg S.L."/>
            <person name="Schwartz J.R."/>
            <person name="Shinn P."/>
            <person name="Southwick A.M."/>
            <person name="Sun H."/>
            <person name="Tallon L.J."/>
            <person name="Tambunga G."/>
            <person name="Toriumi M.J."/>
            <person name="Town C.D."/>
            <person name="Utterback T."/>
            <person name="Van Aken S."/>
            <person name="Vaysberg M."/>
            <person name="Vysotskaia V.S."/>
            <person name="Walker M."/>
            <person name="Wu D."/>
            <person name="Yu G."/>
            <person name="Fraser C.M."/>
            <person name="Venter J.C."/>
            <person name="Davis R.W."/>
        </authorList>
    </citation>
    <scope>NUCLEOTIDE SEQUENCE [LARGE SCALE GENOMIC DNA]</scope>
    <source>
        <strain>cv. Columbia</strain>
    </source>
</reference>
<reference key="2">
    <citation type="journal article" date="2017" name="Plant J.">
        <title>Araport11: a complete reannotation of the Arabidopsis thaliana reference genome.</title>
        <authorList>
            <person name="Cheng C.Y."/>
            <person name="Krishnakumar V."/>
            <person name="Chan A.P."/>
            <person name="Thibaud-Nissen F."/>
            <person name="Schobel S."/>
            <person name="Town C.D."/>
        </authorList>
    </citation>
    <scope>GENOME REANNOTATION</scope>
    <source>
        <strain>cv. Columbia</strain>
    </source>
</reference>
<reference key="3">
    <citation type="submission" date="2002-03" db="EMBL/GenBank/DDBJ databases">
        <title>Full-length cDNA from Arabidopsis thaliana.</title>
        <authorList>
            <person name="Brover V.V."/>
            <person name="Troukhan M.E."/>
            <person name="Alexandrov N.A."/>
            <person name="Lu Y.-P."/>
            <person name="Flavell R.B."/>
            <person name="Feldmann K.A."/>
        </authorList>
    </citation>
    <scope>NUCLEOTIDE SEQUENCE [LARGE SCALE MRNA]</scope>
</reference>
<reference key="4">
    <citation type="journal article" date="2002" name="Science">
        <title>Functional annotation of a full-length Arabidopsis cDNA collection.</title>
        <authorList>
            <person name="Seki M."/>
            <person name="Narusaka M."/>
            <person name="Kamiya A."/>
            <person name="Ishida J."/>
            <person name="Satou M."/>
            <person name="Sakurai T."/>
            <person name="Nakajima M."/>
            <person name="Enju A."/>
            <person name="Akiyama K."/>
            <person name="Oono Y."/>
            <person name="Muramatsu M."/>
            <person name="Hayashizaki Y."/>
            <person name="Kawai J."/>
            <person name="Carninci P."/>
            <person name="Itoh M."/>
            <person name="Ishii Y."/>
            <person name="Arakawa T."/>
            <person name="Shibata K."/>
            <person name="Shinagawa A."/>
            <person name="Shinozaki K."/>
        </authorList>
    </citation>
    <scope>NUCLEOTIDE SEQUENCE [LARGE SCALE MRNA] OF 49-214</scope>
    <source>
        <strain>cv. Columbia</strain>
    </source>
</reference>
<reference key="5">
    <citation type="journal article" date="2003" name="Science">
        <title>Empirical analysis of transcriptional activity in the Arabidopsis genome.</title>
        <authorList>
            <person name="Yamada K."/>
            <person name="Lim J."/>
            <person name="Dale J.M."/>
            <person name="Chen H."/>
            <person name="Shinn P."/>
            <person name="Palm C.J."/>
            <person name="Southwick A.M."/>
            <person name="Wu H.C."/>
            <person name="Kim C.J."/>
            <person name="Nguyen M."/>
            <person name="Pham P.K."/>
            <person name="Cheuk R.F."/>
            <person name="Karlin-Newmann G."/>
            <person name="Liu S.X."/>
            <person name="Lam B."/>
            <person name="Sakano H."/>
            <person name="Wu T."/>
            <person name="Yu G."/>
            <person name="Miranda M."/>
            <person name="Quach H.L."/>
            <person name="Tripp M."/>
            <person name="Chang C.H."/>
            <person name="Lee J.M."/>
            <person name="Toriumi M.J."/>
            <person name="Chan M.M."/>
            <person name="Tang C.C."/>
            <person name="Onodera C.S."/>
            <person name="Deng J.M."/>
            <person name="Akiyama K."/>
            <person name="Ansari Y."/>
            <person name="Arakawa T."/>
            <person name="Banh J."/>
            <person name="Banno F."/>
            <person name="Bowser L."/>
            <person name="Brooks S.Y."/>
            <person name="Carninci P."/>
            <person name="Chao Q."/>
            <person name="Choy N."/>
            <person name="Enju A."/>
            <person name="Goldsmith A.D."/>
            <person name="Gurjal M."/>
            <person name="Hansen N.F."/>
            <person name="Hayashizaki Y."/>
            <person name="Johnson-Hopson C."/>
            <person name="Hsuan V.W."/>
            <person name="Iida K."/>
            <person name="Karnes M."/>
            <person name="Khan S."/>
            <person name="Koesema E."/>
            <person name="Ishida J."/>
            <person name="Jiang P.X."/>
            <person name="Jones T."/>
            <person name="Kawai J."/>
            <person name="Kamiya A."/>
            <person name="Meyers C."/>
            <person name="Nakajima M."/>
            <person name="Narusaka M."/>
            <person name="Seki M."/>
            <person name="Sakurai T."/>
            <person name="Satou M."/>
            <person name="Tamse R."/>
            <person name="Vaysberg M."/>
            <person name="Wallender E.K."/>
            <person name="Wong C."/>
            <person name="Yamamura Y."/>
            <person name="Yuan S."/>
            <person name="Shinozaki K."/>
            <person name="Davis R.W."/>
            <person name="Theologis A."/>
            <person name="Ecker J.R."/>
        </authorList>
    </citation>
    <scope>NUCLEOTIDE SEQUENCE [LARGE SCALE MRNA] OF 50-214</scope>
    <source>
        <strain>cv. Columbia</strain>
    </source>
</reference>
<reference key="6">
    <citation type="journal article" date="2012" name="J. Exp. Bot.">
        <title>Coupled transport of Arabidopsis p24 proteins at the ER-Golgi interface.</title>
        <authorList>
            <person name="Montesinos J.C."/>
            <person name="Sturm S."/>
            <person name="Langhans M."/>
            <person name="Hillmer S."/>
            <person name="Marcote M.J."/>
            <person name="Robinson D.G."/>
            <person name="Aniento F."/>
        </authorList>
    </citation>
    <scope>GENE FAMILY</scope>
    <scope>NOMENCLATURE</scope>
</reference>
<reference key="7">
    <citation type="journal article" date="2012" name="Traffic">
        <title>Subclass-specific localization and trafficking of Arabidopsis p24 proteins in the ER-Golgi interface.</title>
        <authorList>
            <person name="Chen J."/>
            <person name="Qi X."/>
            <person name="Zheng H."/>
        </authorList>
    </citation>
    <scope>GENE FAMILY</scope>
    <scope>SUBCELLULAR LOCATION</scope>
    <scope>COILED-COIL DOMAIN</scope>
</reference>
<evidence type="ECO:0000250" key="1"/>
<evidence type="ECO:0000255" key="2"/>
<evidence type="ECO:0000255" key="3">
    <source>
        <dbReference type="PROSITE-ProRule" id="PRU00096"/>
    </source>
</evidence>
<evidence type="ECO:0000269" key="4">
    <source>
    </source>
</evidence>
<evidence type="ECO:0000305" key="5"/>
<dbReference type="EMBL" id="AC006535">
    <property type="protein sequence ID" value="AAF87046.1"/>
    <property type="molecule type" value="Genomic_DNA"/>
</dbReference>
<dbReference type="EMBL" id="CP002684">
    <property type="protein sequence ID" value="AEE30721.1"/>
    <property type="molecule type" value="Genomic_DNA"/>
</dbReference>
<dbReference type="EMBL" id="AY084765">
    <property type="protein sequence ID" value="AAM67291.1"/>
    <property type="molecule type" value="mRNA"/>
</dbReference>
<dbReference type="EMBL" id="AK118529">
    <property type="protein sequence ID" value="BAC43132.1"/>
    <property type="status" value="ALT_INIT"/>
    <property type="molecule type" value="mRNA"/>
</dbReference>
<dbReference type="EMBL" id="BT003733">
    <property type="protein sequence ID" value="AAO39961.1"/>
    <property type="molecule type" value="mRNA"/>
</dbReference>
<dbReference type="RefSeq" id="NP_564256.1">
    <property type="nucleotide sequence ID" value="NM_102432.3"/>
</dbReference>
<dbReference type="SMR" id="Q9LQY3"/>
<dbReference type="FunCoup" id="Q9LQY3">
    <property type="interactions" value="3625"/>
</dbReference>
<dbReference type="STRING" id="3702.Q9LQY3"/>
<dbReference type="PaxDb" id="3702-AT1G26690.1"/>
<dbReference type="ProteomicsDB" id="248786"/>
<dbReference type="EnsemblPlants" id="AT1G26690.1">
    <property type="protein sequence ID" value="AT1G26690.1"/>
    <property type="gene ID" value="AT1G26690"/>
</dbReference>
<dbReference type="GeneID" id="839210"/>
<dbReference type="Gramene" id="AT1G26690.1">
    <property type="protein sequence ID" value="AT1G26690.1"/>
    <property type="gene ID" value="AT1G26690"/>
</dbReference>
<dbReference type="KEGG" id="ath:AT1G26690"/>
<dbReference type="Araport" id="AT1G26690"/>
<dbReference type="TAIR" id="AT1G26690"/>
<dbReference type="eggNOG" id="KOG1691">
    <property type="taxonomic scope" value="Eukaryota"/>
</dbReference>
<dbReference type="HOGENOM" id="CLU_066963_3_2_1"/>
<dbReference type="InParanoid" id="Q9LQY3"/>
<dbReference type="OMA" id="GATCAWQ"/>
<dbReference type="PhylomeDB" id="Q9LQY3"/>
<dbReference type="PRO" id="PR:Q9LQY3"/>
<dbReference type="Proteomes" id="UP000006548">
    <property type="component" value="Chromosome 1"/>
</dbReference>
<dbReference type="ExpressionAtlas" id="Q9LQY3">
    <property type="expression patterns" value="baseline and differential"/>
</dbReference>
<dbReference type="GO" id="GO:0005789">
    <property type="term" value="C:endoplasmic reticulum membrane"/>
    <property type="evidence" value="ECO:0007669"/>
    <property type="project" value="UniProtKB-SubCell"/>
</dbReference>
<dbReference type="GO" id="GO:0032580">
    <property type="term" value="C:Golgi cisterna membrane"/>
    <property type="evidence" value="ECO:0007669"/>
    <property type="project" value="UniProtKB-SubCell"/>
</dbReference>
<dbReference type="GO" id="GO:0015031">
    <property type="term" value="P:protein transport"/>
    <property type="evidence" value="ECO:0007669"/>
    <property type="project" value="UniProtKB-KW"/>
</dbReference>
<dbReference type="GO" id="GO:0016192">
    <property type="term" value="P:vesicle-mediated transport"/>
    <property type="evidence" value="ECO:0007669"/>
    <property type="project" value="UniProtKB-KW"/>
</dbReference>
<dbReference type="InterPro" id="IPR015720">
    <property type="entry name" value="Emp24-like"/>
</dbReference>
<dbReference type="InterPro" id="IPR009038">
    <property type="entry name" value="GOLD_dom"/>
</dbReference>
<dbReference type="PANTHER" id="PTHR22811">
    <property type="entry name" value="TRANSMEMBRANE EMP24 DOMAIN-CONTAINING PROTEIN"/>
    <property type="match status" value="1"/>
</dbReference>
<dbReference type="Pfam" id="PF01105">
    <property type="entry name" value="EMP24_GP25L"/>
    <property type="match status" value="1"/>
</dbReference>
<dbReference type="SMART" id="SM01190">
    <property type="entry name" value="EMP24_GP25L"/>
    <property type="match status" value="1"/>
</dbReference>
<dbReference type="PROSITE" id="PS50866">
    <property type="entry name" value="GOLD"/>
    <property type="match status" value="1"/>
</dbReference>
<proteinExistence type="evidence at transcript level"/>
<comment type="function">
    <text evidence="1">Involved in vesicular protein trafficking. Mainly functions in the early secretory pathway. Thought to act as cargo receptor at the lumenal side for incorporation of secretory cargo molecules into transport vesicles and to be involved in vesicle coat formation at the cytoplasmic side (By similarity).</text>
</comment>
<comment type="subunit">
    <text evidence="1">Probably oligomerizes with other members of the EMP24/GP25L family. Associates with the COPI vesicle coat (coatomer). Associates with the COPII vesicle coat (coatomer).</text>
</comment>
<comment type="subcellular location">
    <subcellularLocation>
        <location evidence="4">Endoplasmic reticulum membrane</location>
        <topology evidence="4">Single-pass type I membrane protein</topology>
    </subcellularLocation>
    <subcellularLocation>
        <location evidence="4">Golgi apparatus</location>
        <location evidence="4">cis-Golgi network membrane</location>
        <topology evidence="4">Single-pass type I membrane protein</topology>
    </subcellularLocation>
    <subcellularLocation>
        <location evidence="4">Golgi apparatus</location>
        <location evidence="4">Golgi stack membrane</location>
        <topology evidence="4">Single-pass type I membrane protein</topology>
    </subcellularLocation>
    <text evidence="1">Cycles between the endoplasmic reticulum and Golgi via COPI and COPII dependent pathways.</text>
</comment>
<comment type="domain">
    <text evidence="1">The cytoplasmic C-terminal domain contains a functional dilysine-retrieval motif, which is involved in the retrograde Golgi-to-ER transport of the protein.</text>
</comment>
<comment type="similarity">
    <text evidence="5">Belongs to the EMP24/GP25L family.</text>
</comment>
<comment type="sequence caution" evidence="5">
    <conflict type="erroneous initiation">
        <sequence resource="EMBL-CDS" id="BAC43132"/>
    </conflict>
    <text>Truncated N-terminus.</text>
</comment>
<protein>
    <recommendedName>
        <fullName>Transmembrane emp24 domain-containing protein p24delta9</fullName>
    </recommendedName>
    <alternativeName>
        <fullName>p24 family protein delta2c</fullName>
        <shortName>p24delta2c</shortName>
    </alternativeName>
    <alternativeName>
        <fullName>p24 family protein delta9</fullName>
        <shortName>p24delta9</shortName>
    </alternativeName>
</protein>
<organism>
    <name type="scientific">Arabidopsis thaliana</name>
    <name type="common">Mouse-ear cress</name>
    <dbReference type="NCBI Taxonomy" id="3702"/>
    <lineage>
        <taxon>Eukaryota</taxon>
        <taxon>Viridiplantae</taxon>
        <taxon>Streptophyta</taxon>
        <taxon>Embryophyta</taxon>
        <taxon>Tracheophyta</taxon>
        <taxon>Spermatophyta</taxon>
        <taxon>Magnoliopsida</taxon>
        <taxon>eudicotyledons</taxon>
        <taxon>Gunneridae</taxon>
        <taxon>Pentapetalae</taxon>
        <taxon>rosids</taxon>
        <taxon>malvids</taxon>
        <taxon>Brassicales</taxon>
        <taxon>Brassicaceae</taxon>
        <taxon>Camelineae</taxon>
        <taxon>Arabidopsis</taxon>
    </lineage>
</organism>
<gene>
    <name type="ordered locus">At1g26690</name>
    <name type="ORF">T24P13.7</name>
</gene>
<sequence>MFLRSLNLCTILLFLAISSQVSQSLHFELQSGRTKCISEDIKSNSMTVGKYTVVNPNEAHPSPQSHKISIRVTSSYGNTYHHAEDVESGQFAFTAVESGDYMACYTAVDHKPEVTLSIDFDWRTGVQSKSWSSVAKKSQVEVMEFDVKRLIETVNSIHEEMFYLREREEEMQNLNRATNSKMAWLSFLSLFVCLGVAGMQFVHLKTFFEKKKVI</sequence>